<organism>
    <name type="scientific">Staphylococcus saprophyticus subsp. saprophyticus (strain ATCC 15305 / DSM 20229 / NCIMB 8711 / NCTC 7292 / S-41)</name>
    <dbReference type="NCBI Taxonomy" id="342451"/>
    <lineage>
        <taxon>Bacteria</taxon>
        <taxon>Bacillati</taxon>
        <taxon>Bacillota</taxon>
        <taxon>Bacilli</taxon>
        <taxon>Bacillales</taxon>
        <taxon>Staphylococcaceae</taxon>
        <taxon>Staphylococcus</taxon>
    </lineage>
</organism>
<gene>
    <name evidence="1" type="primary">rpsS</name>
    <name type="ordered locus">SSP0667</name>
</gene>
<comment type="function">
    <text evidence="1">Protein S19 forms a complex with S13 that binds strongly to the 16S ribosomal RNA.</text>
</comment>
<comment type="similarity">
    <text evidence="1">Belongs to the universal ribosomal protein uS19 family.</text>
</comment>
<feature type="chain" id="PRO_0000129908" description="Small ribosomal subunit protein uS19">
    <location>
        <begin position="1"/>
        <end position="92"/>
    </location>
</feature>
<feature type="region of interest" description="Disordered" evidence="2">
    <location>
        <begin position="1"/>
        <end position="27"/>
    </location>
</feature>
<feature type="compositionally biased region" description="Basic and acidic residues" evidence="2">
    <location>
        <begin position="9"/>
        <end position="27"/>
    </location>
</feature>
<accession>Q49ZG4</accession>
<proteinExistence type="inferred from homology"/>
<keyword id="KW-1185">Reference proteome</keyword>
<keyword id="KW-0687">Ribonucleoprotein</keyword>
<keyword id="KW-0689">Ribosomal protein</keyword>
<keyword id="KW-0694">RNA-binding</keyword>
<keyword id="KW-0699">rRNA-binding</keyword>
<sequence>MARSIKKGPFADDHLKKKVEAQSGSEKKQVIKTWSRRSTIFPDFIGHTFAVYDGRKHVPVFVTEDMVGHKLGEFAPTRTFKGHAADDKKTRR</sequence>
<protein>
    <recommendedName>
        <fullName evidence="1">Small ribosomal subunit protein uS19</fullName>
    </recommendedName>
    <alternativeName>
        <fullName evidence="3">30S ribosomal protein S19</fullName>
    </alternativeName>
</protein>
<reference key="1">
    <citation type="journal article" date="2005" name="Proc. Natl. Acad. Sci. U.S.A.">
        <title>Whole genome sequence of Staphylococcus saprophyticus reveals the pathogenesis of uncomplicated urinary tract infection.</title>
        <authorList>
            <person name="Kuroda M."/>
            <person name="Yamashita A."/>
            <person name="Hirakawa H."/>
            <person name="Kumano M."/>
            <person name="Morikawa K."/>
            <person name="Higashide M."/>
            <person name="Maruyama A."/>
            <person name="Inose Y."/>
            <person name="Matoba K."/>
            <person name="Toh H."/>
            <person name="Kuhara S."/>
            <person name="Hattori M."/>
            <person name="Ohta T."/>
        </authorList>
    </citation>
    <scope>NUCLEOTIDE SEQUENCE [LARGE SCALE GENOMIC DNA]</scope>
    <source>
        <strain>ATCC 15305 / DSM 20229 / NCIMB 8711 / NCTC 7292 / S-41</strain>
    </source>
</reference>
<name>RS19_STAS1</name>
<evidence type="ECO:0000255" key="1">
    <source>
        <dbReference type="HAMAP-Rule" id="MF_00531"/>
    </source>
</evidence>
<evidence type="ECO:0000256" key="2">
    <source>
        <dbReference type="SAM" id="MobiDB-lite"/>
    </source>
</evidence>
<evidence type="ECO:0000305" key="3"/>
<dbReference type="EMBL" id="AP008934">
    <property type="protein sequence ID" value="BAE17812.1"/>
    <property type="molecule type" value="Genomic_DNA"/>
</dbReference>
<dbReference type="RefSeq" id="WP_002482616.1">
    <property type="nucleotide sequence ID" value="NZ_MTGA01000036.1"/>
</dbReference>
<dbReference type="SMR" id="Q49ZG4"/>
<dbReference type="GeneID" id="69845233"/>
<dbReference type="KEGG" id="ssp:SSP0667"/>
<dbReference type="eggNOG" id="COG0185">
    <property type="taxonomic scope" value="Bacteria"/>
</dbReference>
<dbReference type="HOGENOM" id="CLU_144911_0_1_9"/>
<dbReference type="OrthoDB" id="9797833at2"/>
<dbReference type="Proteomes" id="UP000006371">
    <property type="component" value="Chromosome"/>
</dbReference>
<dbReference type="GO" id="GO:0005737">
    <property type="term" value="C:cytoplasm"/>
    <property type="evidence" value="ECO:0007669"/>
    <property type="project" value="UniProtKB-ARBA"/>
</dbReference>
<dbReference type="GO" id="GO:0015935">
    <property type="term" value="C:small ribosomal subunit"/>
    <property type="evidence" value="ECO:0007669"/>
    <property type="project" value="InterPro"/>
</dbReference>
<dbReference type="GO" id="GO:0019843">
    <property type="term" value="F:rRNA binding"/>
    <property type="evidence" value="ECO:0007669"/>
    <property type="project" value="UniProtKB-UniRule"/>
</dbReference>
<dbReference type="GO" id="GO:0003735">
    <property type="term" value="F:structural constituent of ribosome"/>
    <property type="evidence" value="ECO:0007669"/>
    <property type="project" value="InterPro"/>
</dbReference>
<dbReference type="GO" id="GO:0000028">
    <property type="term" value="P:ribosomal small subunit assembly"/>
    <property type="evidence" value="ECO:0007669"/>
    <property type="project" value="TreeGrafter"/>
</dbReference>
<dbReference type="GO" id="GO:0006412">
    <property type="term" value="P:translation"/>
    <property type="evidence" value="ECO:0007669"/>
    <property type="project" value="UniProtKB-UniRule"/>
</dbReference>
<dbReference type="FunFam" id="3.30.860.10:FF:000001">
    <property type="entry name" value="30S ribosomal protein S19"/>
    <property type="match status" value="1"/>
</dbReference>
<dbReference type="Gene3D" id="3.30.860.10">
    <property type="entry name" value="30s Ribosomal Protein S19, Chain A"/>
    <property type="match status" value="1"/>
</dbReference>
<dbReference type="HAMAP" id="MF_00531">
    <property type="entry name" value="Ribosomal_uS19"/>
    <property type="match status" value="1"/>
</dbReference>
<dbReference type="InterPro" id="IPR002222">
    <property type="entry name" value="Ribosomal_uS19"/>
</dbReference>
<dbReference type="InterPro" id="IPR005732">
    <property type="entry name" value="Ribosomal_uS19_bac-type"/>
</dbReference>
<dbReference type="InterPro" id="IPR020934">
    <property type="entry name" value="Ribosomal_uS19_CS"/>
</dbReference>
<dbReference type="InterPro" id="IPR023575">
    <property type="entry name" value="Ribosomal_uS19_SF"/>
</dbReference>
<dbReference type="NCBIfam" id="TIGR01050">
    <property type="entry name" value="rpsS_bact"/>
    <property type="match status" value="1"/>
</dbReference>
<dbReference type="PANTHER" id="PTHR11880">
    <property type="entry name" value="RIBOSOMAL PROTEIN S19P FAMILY MEMBER"/>
    <property type="match status" value="1"/>
</dbReference>
<dbReference type="PANTHER" id="PTHR11880:SF8">
    <property type="entry name" value="SMALL RIBOSOMAL SUBUNIT PROTEIN US19M"/>
    <property type="match status" value="1"/>
</dbReference>
<dbReference type="Pfam" id="PF00203">
    <property type="entry name" value="Ribosomal_S19"/>
    <property type="match status" value="1"/>
</dbReference>
<dbReference type="PIRSF" id="PIRSF002144">
    <property type="entry name" value="Ribosomal_S19"/>
    <property type="match status" value="1"/>
</dbReference>
<dbReference type="PRINTS" id="PR00975">
    <property type="entry name" value="RIBOSOMALS19"/>
</dbReference>
<dbReference type="SUPFAM" id="SSF54570">
    <property type="entry name" value="Ribosomal protein S19"/>
    <property type="match status" value="1"/>
</dbReference>
<dbReference type="PROSITE" id="PS00323">
    <property type="entry name" value="RIBOSOMAL_S19"/>
    <property type="match status" value="1"/>
</dbReference>